<sequence length="72" mass="8303">MSKEDSFEMEGTVVDTLPNTMFRVELENGHVVTAHISGKMRKNYIRILTGDKVRVELTPYDLSKGRITYRAR</sequence>
<dbReference type="EMBL" id="CP000680">
    <property type="protein sequence ID" value="ABP85148.1"/>
    <property type="molecule type" value="Genomic_DNA"/>
</dbReference>
<dbReference type="SMR" id="A4XUY2"/>
<dbReference type="STRING" id="399739.Pmen_2392"/>
<dbReference type="KEGG" id="pmy:Pmen_2392"/>
<dbReference type="eggNOG" id="COG0361">
    <property type="taxonomic scope" value="Bacteria"/>
</dbReference>
<dbReference type="HOGENOM" id="CLU_151267_1_0_6"/>
<dbReference type="OrthoDB" id="9803250at2"/>
<dbReference type="GO" id="GO:0005829">
    <property type="term" value="C:cytosol"/>
    <property type="evidence" value="ECO:0007669"/>
    <property type="project" value="TreeGrafter"/>
</dbReference>
<dbReference type="GO" id="GO:0043022">
    <property type="term" value="F:ribosome binding"/>
    <property type="evidence" value="ECO:0007669"/>
    <property type="project" value="UniProtKB-UniRule"/>
</dbReference>
<dbReference type="GO" id="GO:0019843">
    <property type="term" value="F:rRNA binding"/>
    <property type="evidence" value="ECO:0007669"/>
    <property type="project" value="UniProtKB-UniRule"/>
</dbReference>
<dbReference type="GO" id="GO:0003743">
    <property type="term" value="F:translation initiation factor activity"/>
    <property type="evidence" value="ECO:0007669"/>
    <property type="project" value="UniProtKB-UniRule"/>
</dbReference>
<dbReference type="CDD" id="cd04451">
    <property type="entry name" value="S1_IF1"/>
    <property type="match status" value="1"/>
</dbReference>
<dbReference type="FunFam" id="2.40.50.140:FF:000002">
    <property type="entry name" value="Translation initiation factor IF-1"/>
    <property type="match status" value="1"/>
</dbReference>
<dbReference type="Gene3D" id="2.40.50.140">
    <property type="entry name" value="Nucleic acid-binding proteins"/>
    <property type="match status" value="1"/>
</dbReference>
<dbReference type="HAMAP" id="MF_00075">
    <property type="entry name" value="IF_1"/>
    <property type="match status" value="1"/>
</dbReference>
<dbReference type="InterPro" id="IPR012340">
    <property type="entry name" value="NA-bd_OB-fold"/>
</dbReference>
<dbReference type="InterPro" id="IPR006196">
    <property type="entry name" value="RNA-binding_domain_S1_IF1"/>
</dbReference>
<dbReference type="InterPro" id="IPR003029">
    <property type="entry name" value="S1_domain"/>
</dbReference>
<dbReference type="InterPro" id="IPR004368">
    <property type="entry name" value="TIF_IF1"/>
</dbReference>
<dbReference type="NCBIfam" id="TIGR00008">
    <property type="entry name" value="infA"/>
    <property type="match status" value="1"/>
</dbReference>
<dbReference type="PANTHER" id="PTHR33370">
    <property type="entry name" value="TRANSLATION INITIATION FACTOR IF-1, CHLOROPLASTIC"/>
    <property type="match status" value="1"/>
</dbReference>
<dbReference type="PANTHER" id="PTHR33370:SF1">
    <property type="entry name" value="TRANSLATION INITIATION FACTOR IF-1, CHLOROPLASTIC"/>
    <property type="match status" value="1"/>
</dbReference>
<dbReference type="Pfam" id="PF01176">
    <property type="entry name" value="eIF-1a"/>
    <property type="match status" value="1"/>
</dbReference>
<dbReference type="SMART" id="SM00316">
    <property type="entry name" value="S1"/>
    <property type="match status" value="1"/>
</dbReference>
<dbReference type="SUPFAM" id="SSF50249">
    <property type="entry name" value="Nucleic acid-binding proteins"/>
    <property type="match status" value="1"/>
</dbReference>
<dbReference type="PROSITE" id="PS50832">
    <property type="entry name" value="S1_IF1_TYPE"/>
    <property type="match status" value="1"/>
</dbReference>
<reference key="1">
    <citation type="submission" date="2007-04" db="EMBL/GenBank/DDBJ databases">
        <title>Complete sequence of Pseudomonas mendocina ymp.</title>
        <authorList>
            <consortium name="US DOE Joint Genome Institute"/>
            <person name="Copeland A."/>
            <person name="Lucas S."/>
            <person name="Lapidus A."/>
            <person name="Barry K."/>
            <person name="Glavina del Rio T."/>
            <person name="Dalin E."/>
            <person name="Tice H."/>
            <person name="Pitluck S."/>
            <person name="Kiss H."/>
            <person name="Brettin T."/>
            <person name="Detter J.C."/>
            <person name="Bruce D."/>
            <person name="Han C."/>
            <person name="Schmutz J."/>
            <person name="Larimer F."/>
            <person name="Land M."/>
            <person name="Hauser L."/>
            <person name="Kyrpides N."/>
            <person name="Mikhailova N."/>
            <person name="Hersman L."/>
            <person name="Dubois J."/>
            <person name="Maurice P."/>
            <person name="Richardson P."/>
        </authorList>
    </citation>
    <scope>NUCLEOTIDE SEQUENCE [LARGE SCALE GENOMIC DNA]</scope>
    <source>
        <strain>ymp</strain>
    </source>
</reference>
<proteinExistence type="inferred from homology"/>
<feature type="chain" id="PRO_0000338890" description="Translation initiation factor IF-1">
    <location>
        <begin position="1"/>
        <end position="72"/>
    </location>
</feature>
<feature type="domain" description="S1-like" evidence="1">
    <location>
        <begin position="1"/>
        <end position="72"/>
    </location>
</feature>
<name>IF1_ECTM1</name>
<gene>
    <name evidence="1" type="primary">infA</name>
    <name type="ordered locus">Pmen_2392</name>
</gene>
<accession>A4XUY2</accession>
<evidence type="ECO:0000255" key="1">
    <source>
        <dbReference type="HAMAP-Rule" id="MF_00075"/>
    </source>
</evidence>
<comment type="function">
    <text evidence="1">One of the essential components for the initiation of protein synthesis. Stabilizes the binding of IF-2 and IF-3 on the 30S subunit to which N-formylmethionyl-tRNA(fMet) subsequently binds. Helps modulate mRNA selection, yielding the 30S pre-initiation complex (PIC). Upon addition of the 50S ribosomal subunit IF-1, IF-2 and IF-3 are released leaving the mature 70S translation initiation complex.</text>
</comment>
<comment type="subunit">
    <text evidence="1">Component of the 30S ribosomal translation pre-initiation complex which assembles on the 30S ribosome in the order IF-2 and IF-3, IF-1 and N-formylmethionyl-tRNA(fMet); mRNA recruitment can occur at any time during PIC assembly.</text>
</comment>
<comment type="subcellular location">
    <subcellularLocation>
        <location evidence="1">Cytoplasm</location>
    </subcellularLocation>
</comment>
<comment type="similarity">
    <text evidence="1">Belongs to the IF-1 family.</text>
</comment>
<protein>
    <recommendedName>
        <fullName evidence="1">Translation initiation factor IF-1</fullName>
    </recommendedName>
</protein>
<organism>
    <name type="scientific">Ectopseudomonas mendocina (strain ymp)</name>
    <name type="common">Pseudomonas mendocina</name>
    <dbReference type="NCBI Taxonomy" id="399739"/>
    <lineage>
        <taxon>Bacteria</taxon>
        <taxon>Pseudomonadati</taxon>
        <taxon>Pseudomonadota</taxon>
        <taxon>Gammaproteobacteria</taxon>
        <taxon>Pseudomonadales</taxon>
        <taxon>Pseudomonadaceae</taxon>
        <taxon>Ectopseudomonas</taxon>
    </lineage>
</organism>
<keyword id="KW-0963">Cytoplasm</keyword>
<keyword id="KW-0396">Initiation factor</keyword>
<keyword id="KW-0648">Protein biosynthesis</keyword>
<keyword id="KW-0694">RNA-binding</keyword>
<keyword id="KW-0699">rRNA-binding</keyword>